<comment type="subcellular location">
    <subcellularLocation>
        <location evidence="1">Cell membrane</location>
        <topology evidence="1">Multi-pass membrane protein</topology>
    </subcellularLocation>
</comment>
<comment type="similarity">
    <text evidence="1">Belongs to the UPF0391 family.</text>
</comment>
<evidence type="ECO:0000255" key="1">
    <source>
        <dbReference type="HAMAP-Rule" id="MF_01361"/>
    </source>
</evidence>
<proteinExistence type="inferred from homology"/>
<accession>A4W693</accession>
<dbReference type="EMBL" id="CP000653">
    <property type="protein sequence ID" value="ABP59223.1"/>
    <property type="molecule type" value="Genomic_DNA"/>
</dbReference>
<dbReference type="RefSeq" id="WP_012015946.1">
    <property type="nucleotide sequence ID" value="NC_009436.1"/>
</dbReference>
<dbReference type="STRING" id="399742.Ent638_0536"/>
<dbReference type="KEGG" id="ent:Ent638_0536"/>
<dbReference type="eggNOG" id="COG5487">
    <property type="taxonomic scope" value="Bacteria"/>
</dbReference>
<dbReference type="HOGENOM" id="CLU_187346_2_0_6"/>
<dbReference type="Proteomes" id="UP000000230">
    <property type="component" value="Chromosome"/>
</dbReference>
<dbReference type="GO" id="GO:0005886">
    <property type="term" value="C:plasma membrane"/>
    <property type="evidence" value="ECO:0007669"/>
    <property type="project" value="UniProtKB-SubCell"/>
</dbReference>
<dbReference type="HAMAP" id="MF_01361">
    <property type="entry name" value="UPF0391"/>
    <property type="match status" value="1"/>
</dbReference>
<dbReference type="InterPro" id="IPR009760">
    <property type="entry name" value="DUF1328"/>
</dbReference>
<dbReference type="NCBIfam" id="NF010229">
    <property type="entry name" value="PRK13682.1-4"/>
    <property type="match status" value="1"/>
</dbReference>
<dbReference type="NCBIfam" id="NF010230">
    <property type="entry name" value="PRK13682.1-5"/>
    <property type="match status" value="1"/>
</dbReference>
<dbReference type="Pfam" id="PF07043">
    <property type="entry name" value="DUF1328"/>
    <property type="match status" value="1"/>
</dbReference>
<dbReference type="PIRSF" id="PIRSF036466">
    <property type="entry name" value="UCP036466"/>
    <property type="match status" value="1"/>
</dbReference>
<protein>
    <recommendedName>
        <fullName evidence="1">UPF0391 membrane protein Ent638_0536</fullName>
    </recommendedName>
</protein>
<organism>
    <name type="scientific">Enterobacter sp. (strain 638)</name>
    <dbReference type="NCBI Taxonomy" id="399742"/>
    <lineage>
        <taxon>Bacteria</taxon>
        <taxon>Pseudomonadati</taxon>
        <taxon>Pseudomonadota</taxon>
        <taxon>Gammaproteobacteria</taxon>
        <taxon>Enterobacterales</taxon>
        <taxon>Enterobacteriaceae</taxon>
        <taxon>Enterobacter</taxon>
    </lineage>
</organism>
<feature type="chain" id="PRO_1000067781" description="UPF0391 membrane protein Ent638_0536">
    <location>
        <begin position="1"/>
        <end position="53"/>
    </location>
</feature>
<feature type="transmembrane region" description="Helical" evidence="1">
    <location>
        <begin position="4"/>
        <end position="24"/>
    </location>
</feature>
<feature type="transmembrane region" description="Helical" evidence="1">
    <location>
        <begin position="27"/>
        <end position="47"/>
    </location>
</feature>
<keyword id="KW-1003">Cell membrane</keyword>
<keyword id="KW-0472">Membrane</keyword>
<keyword id="KW-0812">Transmembrane</keyword>
<keyword id="KW-1133">Transmembrane helix</keyword>
<reference key="1">
    <citation type="journal article" date="2010" name="PLoS Genet.">
        <title>Genome sequence of the plant growth promoting endophytic bacterium Enterobacter sp. 638.</title>
        <authorList>
            <person name="Taghavi S."/>
            <person name="van der Lelie D."/>
            <person name="Hoffman A."/>
            <person name="Zhang Y.B."/>
            <person name="Walla M.D."/>
            <person name="Vangronsveld J."/>
            <person name="Newman L."/>
            <person name="Monchy S."/>
        </authorList>
    </citation>
    <scope>NUCLEOTIDE SEQUENCE [LARGE SCALE GENOMIC DNA]</scope>
    <source>
        <strain>638</strain>
    </source>
</reference>
<gene>
    <name type="ordered locus">Ent638_0536</name>
</gene>
<name>Y536_ENT38</name>
<sequence>MFRWGIIFLVIALIAAALGFGGLAGTAAWAAKLVFVVGIVLFLVSLFTGRRRP</sequence>